<proteinExistence type="inferred from homology"/>
<organism>
    <name type="scientific">Emericella nidulans</name>
    <name type="common">Aspergillus nidulans</name>
    <dbReference type="NCBI Taxonomy" id="162425"/>
    <lineage>
        <taxon>Eukaryota</taxon>
        <taxon>Fungi</taxon>
        <taxon>Dikarya</taxon>
        <taxon>Ascomycota</taxon>
        <taxon>Pezizomycotina</taxon>
        <taxon>Eurotiomycetes</taxon>
        <taxon>Eurotiomycetidae</taxon>
        <taxon>Eurotiales</taxon>
        <taxon>Aspergillaceae</taxon>
        <taxon>Aspergillus</taxon>
        <taxon>Aspergillus subgen. Nidulantes</taxon>
    </lineage>
</organism>
<geneLocation type="mitochondrion"/>
<gene>
    <name type="primary">nd4</name>
    <name type="synonym">ndhD</name>
</gene>
<keyword id="KW-0249">Electron transport</keyword>
<keyword id="KW-0472">Membrane</keyword>
<keyword id="KW-0496">Mitochondrion</keyword>
<keyword id="KW-0520">NAD</keyword>
<keyword id="KW-0679">Respiratory chain</keyword>
<keyword id="KW-1278">Translocase</keyword>
<keyword id="KW-0812">Transmembrane</keyword>
<keyword id="KW-1133">Transmembrane helix</keyword>
<keyword id="KW-0813">Transport</keyword>
<keyword id="KW-0830">Ubiquinone</keyword>
<name>NU4M_EMEND</name>
<dbReference type="EC" id="7.1.1.2"/>
<dbReference type="EMBL" id="J01390">
    <property type="protein sequence ID" value="AAA99203.1"/>
    <property type="molecule type" value="Genomic_DNA"/>
</dbReference>
<dbReference type="EMBL" id="X04161">
    <property type="protein sequence ID" value="CAA27771.1"/>
    <property type="molecule type" value="Genomic_DNA"/>
</dbReference>
<dbReference type="PIR" id="A00443">
    <property type="entry name" value="QXAS4M"/>
</dbReference>
<dbReference type="SMR" id="P03914"/>
<dbReference type="GO" id="GO:0031966">
    <property type="term" value="C:mitochondrial membrane"/>
    <property type="evidence" value="ECO:0007669"/>
    <property type="project" value="UniProtKB-SubCell"/>
</dbReference>
<dbReference type="GO" id="GO:0008137">
    <property type="term" value="F:NADH dehydrogenase (ubiquinone) activity"/>
    <property type="evidence" value="ECO:0007669"/>
    <property type="project" value="UniProtKB-EC"/>
</dbReference>
<dbReference type="GO" id="GO:0048039">
    <property type="term" value="F:ubiquinone binding"/>
    <property type="evidence" value="ECO:0007669"/>
    <property type="project" value="TreeGrafter"/>
</dbReference>
<dbReference type="GO" id="GO:0042773">
    <property type="term" value="P:ATP synthesis coupled electron transport"/>
    <property type="evidence" value="ECO:0007669"/>
    <property type="project" value="InterPro"/>
</dbReference>
<dbReference type="GO" id="GO:0015990">
    <property type="term" value="P:electron transport coupled proton transport"/>
    <property type="evidence" value="ECO:0007669"/>
    <property type="project" value="TreeGrafter"/>
</dbReference>
<dbReference type="InterPro" id="IPR003918">
    <property type="entry name" value="NADH_UbQ_OxRdtase"/>
</dbReference>
<dbReference type="InterPro" id="IPR001750">
    <property type="entry name" value="ND/Mrp_TM"/>
</dbReference>
<dbReference type="PANTHER" id="PTHR43507">
    <property type="entry name" value="NADH-UBIQUINONE OXIDOREDUCTASE CHAIN 4"/>
    <property type="match status" value="1"/>
</dbReference>
<dbReference type="PANTHER" id="PTHR43507:SF1">
    <property type="entry name" value="NADH-UBIQUINONE OXIDOREDUCTASE CHAIN 4"/>
    <property type="match status" value="1"/>
</dbReference>
<dbReference type="Pfam" id="PF00361">
    <property type="entry name" value="Proton_antipo_M"/>
    <property type="match status" value="1"/>
</dbReference>
<dbReference type="PRINTS" id="PR01437">
    <property type="entry name" value="NUOXDRDTASE4"/>
</dbReference>
<comment type="function">
    <text evidence="1">Core subunit of the mitochondrial membrane respiratory chain NADH dehydrogenase (Complex I) that is believed to belong to the minimal assembly required for catalysis. Complex I functions in the transfer of electrons from NADH to the respiratory chain. The immediate electron acceptor for the enzyme is believed to be ubiquinone (By similarity).</text>
</comment>
<comment type="catalytic activity">
    <reaction>
        <text>a ubiquinone + NADH + 5 H(+)(in) = a ubiquinol + NAD(+) + 4 H(+)(out)</text>
        <dbReference type="Rhea" id="RHEA:29091"/>
        <dbReference type="Rhea" id="RHEA-COMP:9565"/>
        <dbReference type="Rhea" id="RHEA-COMP:9566"/>
        <dbReference type="ChEBI" id="CHEBI:15378"/>
        <dbReference type="ChEBI" id="CHEBI:16389"/>
        <dbReference type="ChEBI" id="CHEBI:17976"/>
        <dbReference type="ChEBI" id="CHEBI:57540"/>
        <dbReference type="ChEBI" id="CHEBI:57945"/>
        <dbReference type="EC" id="7.1.1.2"/>
    </reaction>
</comment>
<comment type="subcellular location">
    <subcellularLocation>
        <location evidence="1">Mitochondrion membrane</location>
        <topology evidence="1">Multi-pass membrane protein</topology>
    </subcellularLocation>
</comment>
<comment type="similarity">
    <text evidence="3">Belongs to the complex I subunit 4 family.</text>
</comment>
<evidence type="ECO:0000250" key="1"/>
<evidence type="ECO:0000255" key="2"/>
<evidence type="ECO:0000305" key="3"/>
<reference key="1">
    <citation type="journal article" date="1982" name="Nucleic Acids Res.">
        <title>Nucleotide sequence of Aspergillus nidulans mitochondrial genes coding for ATPase subunit 6, cytochrome oxidase subunit 3, seven unidentified proteins, four tRNAs and L-rRNA.</title>
        <authorList>
            <person name="Netzker R."/>
            <person name="Koechel H.G."/>
            <person name="Basak N."/>
            <person name="Kuentzel H."/>
        </authorList>
    </citation>
    <scope>NUCLEOTIDE SEQUENCE [GENOMIC DNA]</scope>
    <source>
        <strain>pabaA1 biA1</strain>
    </source>
</reference>
<protein>
    <recommendedName>
        <fullName>NADH-ubiquinone oxidoreductase chain 4</fullName>
        <ecNumber>7.1.1.2</ecNumber>
    </recommendedName>
    <alternativeName>
        <fullName>NADH dehydrogenase subunit 4</fullName>
    </alternativeName>
</protein>
<sequence length="221" mass="24444">ASINYTYIIYVIGVITILYASFSTLRTIDIKELIAYSSVSHAAVYLIGAFSNTIQGIEGSIALGLAHGFVSSGLFICAGGILYDRSSTRLITYYRGMAQIMPIFSVLFFILALGNSGTPLTLNFIGEFMSLYGVFERMPILGVLASTSIVFSAAYTIFMYNRIVFGGSYSIYFRENIGDVTRREFIMLLVFVILTVLFGIYPAPILDGLHYSVSYLIYNIN</sequence>
<accession>P03914</accession>
<feature type="chain" id="PRO_0000117933" description="NADH-ubiquinone oxidoreductase chain 4">
    <location>
        <begin position="1" status="less than"/>
        <end position="221"/>
    </location>
</feature>
<feature type="transmembrane region" description="Helical" evidence="2">
    <location>
        <begin position="5"/>
        <end position="25"/>
    </location>
</feature>
<feature type="transmembrane region" description="Helical" evidence="2">
    <location>
        <begin position="34"/>
        <end position="54"/>
    </location>
</feature>
<feature type="transmembrane region" description="Helical" evidence="2">
    <location>
        <begin position="61"/>
        <end position="81"/>
    </location>
</feature>
<feature type="transmembrane region" description="Helical" evidence="2">
    <location>
        <begin position="100"/>
        <end position="120"/>
    </location>
</feature>
<feature type="transmembrane region" description="Helical" evidence="2">
    <location>
        <begin position="140"/>
        <end position="160"/>
    </location>
</feature>
<feature type="transmembrane region" description="Helical" evidence="2">
    <location>
        <begin position="185"/>
        <end position="205"/>
    </location>
</feature>
<feature type="non-terminal residue">
    <location>
        <position position="1"/>
    </location>
</feature>